<reference key="1">
    <citation type="submission" date="2006-12" db="EMBL/GenBank/DDBJ databases">
        <title>Complete sequence of chromosome of Mycobacterium sp. KMS.</title>
        <authorList>
            <consortium name="US DOE Joint Genome Institute"/>
            <person name="Copeland A."/>
            <person name="Lucas S."/>
            <person name="Lapidus A."/>
            <person name="Barry K."/>
            <person name="Detter J.C."/>
            <person name="Glavina del Rio T."/>
            <person name="Hammon N."/>
            <person name="Israni S."/>
            <person name="Dalin E."/>
            <person name="Tice H."/>
            <person name="Pitluck S."/>
            <person name="Kiss H."/>
            <person name="Brettin T."/>
            <person name="Bruce D."/>
            <person name="Han C."/>
            <person name="Tapia R."/>
            <person name="Gilna P."/>
            <person name="Schmutz J."/>
            <person name="Larimer F."/>
            <person name="Land M."/>
            <person name="Hauser L."/>
            <person name="Kyrpides N."/>
            <person name="Mikhailova N."/>
            <person name="Miller C.D."/>
            <person name="Richardson P."/>
        </authorList>
    </citation>
    <scope>NUCLEOTIDE SEQUENCE [LARGE SCALE GENOMIC DNA]</scope>
    <source>
        <strain>KMS</strain>
    </source>
</reference>
<keyword id="KW-0378">Hydrolase</keyword>
<keyword id="KW-0511">Multifunctional enzyme</keyword>
<keyword id="KW-0658">Purine biosynthesis</keyword>
<keyword id="KW-0808">Transferase</keyword>
<dbReference type="EC" id="2.1.2.3" evidence="1"/>
<dbReference type="EC" id="3.5.4.10" evidence="1"/>
<dbReference type="EMBL" id="CP000518">
    <property type="protein sequence ID" value="ABL93596.1"/>
    <property type="molecule type" value="Genomic_DNA"/>
</dbReference>
<dbReference type="SMR" id="A1UL88"/>
<dbReference type="STRING" id="189918.Mkms_4405"/>
<dbReference type="KEGG" id="mkm:Mkms_4405"/>
<dbReference type="HOGENOM" id="CLU_016316_5_2_11"/>
<dbReference type="OrthoDB" id="9802065at2"/>
<dbReference type="UniPathway" id="UPA00074">
    <property type="reaction ID" value="UER00133"/>
</dbReference>
<dbReference type="UniPathway" id="UPA00074">
    <property type="reaction ID" value="UER00135"/>
</dbReference>
<dbReference type="GO" id="GO:0005829">
    <property type="term" value="C:cytosol"/>
    <property type="evidence" value="ECO:0007669"/>
    <property type="project" value="TreeGrafter"/>
</dbReference>
<dbReference type="GO" id="GO:0003937">
    <property type="term" value="F:IMP cyclohydrolase activity"/>
    <property type="evidence" value="ECO:0007669"/>
    <property type="project" value="UniProtKB-UniRule"/>
</dbReference>
<dbReference type="GO" id="GO:0004643">
    <property type="term" value="F:phosphoribosylaminoimidazolecarboxamide formyltransferase activity"/>
    <property type="evidence" value="ECO:0007669"/>
    <property type="project" value="UniProtKB-UniRule"/>
</dbReference>
<dbReference type="GO" id="GO:0006189">
    <property type="term" value="P:'de novo' IMP biosynthetic process"/>
    <property type="evidence" value="ECO:0007669"/>
    <property type="project" value="UniProtKB-UniRule"/>
</dbReference>
<dbReference type="CDD" id="cd01421">
    <property type="entry name" value="IMPCH"/>
    <property type="match status" value="1"/>
</dbReference>
<dbReference type="FunFam" id="3.40.140.20:FF:000001">
    <property type="entry name" value="Bifunctional purine biosynthesis protein PurH"/>
    <property type="match status" value="1"/>
</dbReference>
<dbReference type="FunFam" id="3.40.140.20:FF:000002">
    <property type="entry name" value="Bifunctional purine biosynthesis protein PurH"/>
    <property type="match status" value="1"/>
</dbReference>
<dbReference type="FunFam" id="3.40.50.1380:FF:000001">
    <property type="entry name" value="Bifunctional purine biosynthesis protein PurH"/>
    <property type="match status" value="1"/>
</dbReference>
<dbReference type="Gene3D" id="3.40.140.20">
    <property type="match status" value="2"/>
</dbReference>
<dbReference type="Gene3D" id="3.40.50.1380">
    <property type="entry name" value="Methylglyoxal synthase-like domain"/>
    <property type="match status" value="1"/>
</dbReference>
<dbReference type="HAMAP" id="MF_00139">
    <property type="entry name" value="PurH"/>
    <property type="match status" value="1"/>
</dbReference>
<dbReference type="InterPro" id="IPR024051">
    <property type="entry name" value="AICAR_Tfase_dup_dom_sf"/>
</dbReference>
<dbReference type="InterPro" id="IPR016193">
    <property type="entry name" value="Cytidine_deaminase-like"/>
</dbReference>
<dbReference type="InterPro" id="IPR011607">
    <property type="entry name" value="MGS-like_dom"/>
</dbReference>
<dbReference type="InterPro" id="IPR036914">
    <property type="entry name" value="MGS-like_dom_sf"/>
</dbReference>
<dbReference type="InterPro" id="IPR002695">
    <property type="entry name" value="PurH-like"/>
</dbReference>
<dbReference type="NCBIfam" id="NF002049">
    <property type="entry name" value="PRK00881.1"/>
    <property type="match status" value="1"/>
</dbReference>
<dbReference type="NCBIfam" id="TIGR00355">
    <property type="entry name" value="purH"/>
    <property type="match status" value="1"/>
</dbReference>
<dbReference type="PANTHER" id="PTHR11692:SF0">
    <property type="entry name" value="BIFUNCTIONAL PURINE BIOSYNTHESIS PROTEIN ATIC"/>
    <property type="match status" value="1"/>
</dbReference>
<dbReference type="PANTHER" id="PTHR11692">
    <property type="entry name" value="BIFUNCTIONAL PURINE BIOSYNTHESIS PROTEIN PURH"/>
    <property type="match status" value="1"/>
</dbReference>
<dbReference type="Pfam" id="PF01808">
    <property type="entry name" value="AICARFT_IMPCHas"/>
    <property type="match status" value="1"/>
</dbReference>
<dbReference type="Pfam" id="PF02142">
    <property type="entry name" value="MGS"/>
    <property type="match status" value="1"/>
</dbReference>
<dbReference type="PIRSF" id="PIRSF000414">
    <property type="entry name" value="AICARFT_IMPCHas"/>
    <property type="match status" value="1"/>
</dbReference>
<dbReference type="SMART" id="SM00798">
    <property type="entry name" value="AICARFT_IMPCHas"/>
    <property type="match status" value="1"/>
</dbReference>
<dbReference type="SMART" id="SM00851">
    <property type="entry name" value="MGS"/>
    <property type="match status" value="1"/>
</dbReference>
<dbReference type="SUPFAM" id="SSF53927">
    <property type="entry name" value="Cytidine deaminase-like"/>
    <property type="match status" value="1"/>
</dbReference>
<dbReference type="SUPFAM" id="SSF52335">
    <property type="entry name" value="Methylglyoxal synthase-like"/>
    <property type="match status" value="1"/>
</dbReference>
<dbReference type="PROSITE" id="PS51855">
    <property type="entry name" value="MGS"/>
    <property type="match status" value="1"/>
</dbReference>
<proteinExistence type="inferred from homology"/>
<comment type="catalytic activity">
    <reaction evidence="1">
        <text>(6R)-10-formyltetrahydrofolate + 5-amino-1-(5-phospho-beta-D-ribosyl)imidazole-4-carboxamide = 5-formamido-1-(5-phospho-D-ribosyl)imidazole-4-carboxamide + (6S)-5,6,7,8-tetrahydrofolate</text>
        <dbReference type="Rhea" id="RHEA:22192"/>
        <dbReference type="ChEBI" id="CHEBI:57453"/>
        <dbReference type="ChEBI" id="CHEBI:58467"/>
        <dbReference type="ChEBI" id="CHEBI:58475"/>
        <dbReference type="ChEBI" id="CHEBI:195366"/>
        <dbReference type="EC" id="2.1.2.3"/>
    </reaction>
</comment>
<comment type="catalytic activity">
    <reaction evidence="1">
        <text>IMP + H2O = 5-formamido-1-(5-phospho-D-ribosyl)imidazole-4-carboxamide</text>
        <dbReference type="Rhea" id="RHEA:18445"/>
        <dbReference type="ChEBI" id="CHEBI:15377"/>
        <dbReference type="ChEBI" id="CHEBI:58053"/>
        <dbReference type="ChEBI" id="CHEBI:58467"/>
        <dbReference type="EC" id="3.5.4.10"/>
    </reaction>
</comment>
<comment type="pathway">
    <text evidence="1">Purine metabolism; IMP biosynthesis via de novo pathway; 5-formamido-1-(5-phospho-D-ribosyl)imidazole-4-carboxamide from 5-amino-1-(5-phospho-D-ribosyl)imidazole-4-carboxamide (10-formyl THF route): step 1/1.</text>
</comment>
<comment type="pathway">
    <text evidence="1">Purine metabolism; IMP biosynthesis via de novo pathway; IMP from 5-formamido-1-(5-phospho-D-ribosyl)imidazole-4-carboxamide: step 1/1.</text>
</comment>
<comment type="domain">
    <text evidence="1">The IMP cyclohydrolase activity resides in the N-terminal region.</text>
</comment>
<comment type="similarity">
    <text evidence="1">Belongs to the PurH family.</text>
</comment>
<accession>A1UL88</accession>
<organism>
    <name type="scientific">Mycobacterium sp. (strain KMS)</name>
    <dbReference type="NCBI Taxonomy" id="189918"/>
    <lineage>
        <taxon>Bacteria</taxon>
        <taxon>Bacillati</taxon>
        <taxon>Actinomycetota</taxon>
        <taxon>Actinomycetes</taxon>
        <taxon>Mycobacteriales</taxon>
        <taxon>Mycobacteriaceae</taxon>
        <taxon>Mycobacterium</taxon>
    </lineage>
</organism>
<evidence type="ECO:0000255" key="1">
    <source>
        <dbReference type="HAMAP-Rule" id="MF_00139"/>
    </source>
</evidence>
<evidence type="ECO:0000255" key="2">
    <source>
        <dbReference type="PROSITE-ProRule" id="PRU01202"/>
    </source>
</evidence>
<sequence>MSGDQGQAGAKRPIRRALISVYDKTGLIDLARGLHEAGVDIVSTGSTAKTIADKGIPVTPVEFVTGFPEVLDGRVKTLHPHIHAGLLADTRKPEHVEALAKLGIAPFDLVVVNLYPFSETVESGASVDECVEQIDIGGPSMVRAAAKNHPSVAVVVEPNGYDGVLAAVRTGGFTLAERKILASLAFRHTAEYDVAVASWMGSTLAPEEPAQKLPAWVGGTWRRAAVLRYGENPHQQAALYRDATAWPGLAQAEQLHGKEMSYNNYTDADAAWRAAFDHEEICVAIIKHANPCGIAISSVSVADAHRKAHECDPLSAFGGVIATNSSVSVEMAETVADIFTEVIVAPAYEPGAVEILSRKKNIRILVAAQPPTTGTELRPISGGLLLQQRDALDADGDDPVNWTLATGEPADPATLANLKFAWRSCRAVKSNAIVVVADGATVGVGMGQVNRVDAARLAVQRAGDRVRGAVAASDAFFPFPDGLETLTEAGVKAIVHPGGSMRDDVVTEAAAKAGISLYLTGARHFAH</sequence>
<name>PUR9_MYCSK</name>
<feature type="chain" id="PRO_1000018912" description="Bifunctional purine biosynthesis protein PurH">
    <location>
        <begin position="1"/>
        <end position="527"/>
    </location>
</feature>
<feature type="domain" description="MGS-like" evidence="2">
    <location>
        <begin position="8"/>
        <end position="156"/>
    </location>
</feature>
<protein>
    <recommendedName>
        <fullName evidence="1">Bifunctional purine biosynthesis protein PurH</fullName>
    </recommendedName>
    <domain>
        <recommendedName>
            <fullName evidence="1">Phosphoribosylaminoimidazolecarboxamide formyltransferase</fullName>
            <ecNumber evidence="1">2.1.2.3</ecNumber>
        </recommendedName>
        <alternativeName>
            <fullName evidence="1">AICAR transformylase</fullName>
        </alternativeName>
    </domain>
    <domain>
        <recommendedName>
            <fullName evidence="1">IMP cyclohydrolase</fullName>
            <ecNumber evidence="1">3.5.4.10</ecNumber>
        </recommendedName>
        <alternativeName>
            <fullName evidence="1">ATIC</fullName>
        </alternativeName>
        <alternativeName>
            <fullName evidence="1">IMP synthase</fullName>
        </alternativeName>
        <alternativeName>
            <fullName evidence="1">Inosinicase</fullName>
        </alternativeName>
    </domain>
</protein>
<gene>
    <name evidence="1" type="primary">purH</name>
    <name type="ordered locus">Mkms_4405</name>
</gene>